<name>ASSY_CROS8</name>
<keyword id="KW-0028">Amino-acid biosynthesis</keyword>
<keyword id="KW-0055">Arginine biosynthesis</keyword>
<keyword id="KW-0067">ATP-binding</keyword>
<keyword id="KW-0963">Cytoplasm</keyword>
<keyword id="KW-0436">Ligase</keyword>
<keyword id="KW-0547">Nucleotide-binding</keyword>
<keyword id="KW-1185">Reference proteome</keyword>
<evidence type="ECO:0000255" key="1">
    <source>
        <dbReference type="HAMAP-Rule" id="MF_00005"/>
    </source>
</evidence>
<organism>
    <name type="scientific">Cronobacter sakazakii (strain ATCC BAA-894)</name>
    <name type="common">Enterobacter sakazakii</name>
    <dbReference type="NCBI Taxonomy" id="290339"/>
    <lineage>
        <taxon>Bacteria</taxon>
        <taxon>Pseudomonadati</taxon>
        <taxon>Pseudomonadota</taxon>
        <taxon>Gammaproteobacteria</taxon>
        <taxon>Enterobacterales</taxon>
        <taxon>Enterobacteriaceae</taxon>
        <taxon>Cronobacter</taxon>
    </lineage>
</organism>
<sequence>MQNHGIKKVVLAYSGGLDTSAIIPWLKENYEGCDVVACVVDIGQDRDDLKGVEQKALRSGASECYVVDAREEFIKDYVYPVLQTGALYEGSYLLGTSMARPLIAKALVDVAKKVGADALCHGATGKGNDQVRFESAWAALAPHLKVIAPWREWNLRSREALLDYLKARDIPTTASLEKIYSRDENAWHISTEGGVLESPWNAPNQDCWVWTVDPKDAPDEAEQVTVTVEKGNVVAVNGEQLTPFGCLEVLNKIGAKHGVGRIDIVENRLVGIKSRGCYETPGGTIMMAALRGVEQLVLDRDSFKWREQVGLEMSYVVYDGRWFAPLRQSLQAAAQSLAEQVSGEVVLELYKGRVTAIQKKSTNSLYNEEFATFGEDEVYDHSHAGGFIRLFSLSSRIRALNELKK</sequence>
<accession>A7ML85</accession>
<protein>
    <recommendedName>
        <fullName evidence="1">Argininosuccinate synthase</fullName>
        <ecNumber evidence="1">6.3.4.5</ecNumber>
    </recommendedName>
    <alternativeName>
        <fullName evidence="1">Citrulline--aspartate ligase</fullName>
    </alternativeName>
</protein>
<dbReference type="EC" id="6.3.4.5" evidence="1"/>
<dbReference type="EMBL" id="CP000783">
    <property type="protein sequence ID" value="ABU78993.1"/>
    <property type="molecule type" value="Genomic_DNA"/>
</dbReference>
<dbReference type="RefSeq" id="WP_012126069.1">
    <property type="nucleotide sequence ID" value="NC_009778.1"/>
</dbReference>
<dbReference type="SMR" id="A7ML85"/>
<dbReference type="KEGG" id="esa:ESA_03807"/>
<dbReference type="PATRIC" id="fig|290339.8.peg.3381"/>
<dbReference type="HOGENOM" id="CLU_032784_4_2_6"/>
<dbReference type="UniPathway" id="UPA00068">
    <property type="reaction ID" value="UER00113"/>
</dbReference>
<dbReference type="Proteomes" id="UP000000260">
    <property type="component" value="Chromosome"/>
</dbReference>
<dbReference type="GO" id="GO:0005737">
    <property type="term" value="C:cytoplasm"/>
    <property type="evidence" value="ECO:0007669"/>
    <property type="project" value="UniProtKB-SubCell"/>
</dbReference>
<dbReference type="GO" id="GO:0004055">
    <property type="term" value="F:argininosuccinate synthase activity"/>
    <property type="evidence" value="ECO:0007669"/>
    <property type="project" value="UniProtKB-UniRule"/>
</dbReference>
<dbReference type="GO" id="GO:0005524">
    <property type="term" value="F:ATP binding"/>
    <property type="evidence" value="ECO:0007669"/>
    <property type="project" value="UniProtKB-UniRule"/>
</dbReference>
<dbReference type="GO" id="GO:0000053">
    <property type="term" value="P:argininosuccinate metabolic process"/>
    <property type="evidence" value="ECO:0007669"/>
    <property type="project" value="TreeGrafter"/>
</dbReference>
<dbReference type="GO" id="GO:0006526">
    <property type="term" value="P:L-arginine biosynthetic process"/>
    <property type="evidence" value="ECO:0007669"/>
    <property type="project" value="UniProtKB-UniRule"/>
</dbReference>
<dbReference type="GO" id="GO:0000050">
    <property type="term" value="P:urea cycle"/>
    <property type="evidence" value="ECO:0007669"/>
    <property type="project" value="TreeGrafter"/>
</dbReference>
<dbReference type="CDD" id="cd01999">
    <property type="entry name" value="ASS"/>
    <property type="match status" value="1"/>
</dbReference>
<dbReference type="FunFam" id="3.40.50.620:FF:000019">
    <property type="entry name" value="Argininosuccinate synthase"/>
    <property type="match status" value="1"/>
</dbReference>
<dbReference type="FunFam" id="3.90.1260.10:FF:000007">
    <property type="entry name" value="Argininosuccinate synthase"/>
    <property type="match status" value="1"/>
</dbReference>
<dbReference type="Gene3D" id="3.90.1260.10">
    <property type="entry name" value="Argininosuccinate synthetase, chain A, domain 2"/>
    <property type="match status" value="1"/>
</dbReference>
<dbReference type="Gene3D" id="3.40.50.620">
    <property type="entry name" value="HUPs"/>
    <property type="match status" value="1"/>
</dbReference>
<dbReference type="Gene3D" id="1.20.5.470">
    <property type="entry name" value="Single helix bin"/>
    <property type="match status" value="1"/>
</dbReference>
<dbReference type="HAMAP" id="MF_00005">
    <property type="entry name" value="Arg_succ_synth_type1"/>
    <property type="match status" value="1"/>
</dbReference>
<dbReference type="InterPro" id="IPR048268">
    <property type="entry name" value="Arginosuc_syn_C"/>
</dbReference>
<dbReference type="InterPro" id="IPR048267">
    <property type="entry name" value="Arginosuc_syn_N"/>
</dbReference>
<dbReference type="InterPro" id="IPR001518">
    <property type="entry name" value="Arginosuc_synth"/>
</dbReference>
<dbReference type="InterPro" id="IPR018223">
    <property type="entry name" value="Arginosuc_synth_CS"/>
</dbReference>
<dbReference type="InterPro" id="IPR023434">
    <property type="entry name" value="Arginosuc_synth_type_1_subfam"/>
</dbReference>
<dbReference type="InterPro" id="IPR024074">
    <property type="entry name" value="AS_cat/multimer_dom_body"/>
</dbReference>
<dbReference type="InterPro" id="IPR014729">
    <property type="entry name" value="Rossmann-like_a/b/a_fold"/>
</dbReference>
<dbReference type="NCBIfam" id="TIGR00032">
    <property type="entry name" value="argG"/>
    <property type="match status" value="1"/>
</dbReference>
<dbReference type="NCBIfam" id="NF001770">
    <property type="entry name" value="PRK00509.1"/>
    <property type="match status" value="1"/>
</dbReference>
<dbReference type="PANTHER" id="PTHR11587">
    <property type="entry name" value="ARGININOSUCCINATE SYNTHASE"/>
    <property type="match status" value="1"/>
</dbReference>
<dbReference type="PANTHER" id="PTHR11587:SF2">
    <property type="entry name" value="ARGININOSUCCINATE SYNTHASE"/>
    <property type="match status" value="1"/>
</dbReference>
<dbReference type="Pfam" id="PF20979">
    <property type="entry name" value="Arginosuc_syn_C"/>
    <property type="match status" value="1"/>
</dbReference>
<dbReference type="Pfam" id="PF00764">
    <property type="entry name" value="Arginosuc_synth"/>
    <property type="match status" value="1"/>
</dbReference>
<dbReference type="SUPFAM" id="SSF52402">
    <property type="entry name" value="Adenine nucleotide alpha hydrolases-like"/>
    <property type="match status" value="1"/>
</dbReference>
<dbReference type="SUPFAM" id="SSF69864">
    <property type="entry name" value="Argininosuccinate synthetase, C-terminal domain"/>
    <property type="match status" value="1"/>
</dbReference>
<dbReference type="PROSITE" id="PS00564">
    <property type="entry name" value="ARGININOSUCCIN_SYN_1"/>
    <property type="match status" value="1"/>
</dbReference>
<dbReference type="PROSITE" id="PS00565">
    <property type="entry name" value="ARGININOSUCCIN_SYN_2"/>
    <property type="match status" value="1"/>
</dbReference>
<reference key="1">
    <citation type="journal article" date="2010" name="PLoS ONE">
        <title>Genome sequence of Cronobacter sakazakii BAA-894 and comparative genomic hybridization analysis with other Cronobacter species.</title>
        <authorList>
            <person name="Kucerova E."/>
            <person name="Clifton S.W."/>
            <person name="Xia X.Q."/>
            <person name="Long F."/>
            <person name="Porwollik S."/>
            <person name="Fulton L."/>
            <person name="Fronick C."/>
            <person name="Minx P."/>
            <person name="Kyung K."/>
            <person name="Warren W."/>
            <person name="Fulton R."/>
            <person name="Feng D."/>
            <person name="Wollam A."/>
            <person name="Shah N."/>
            <person name="Bhonagiri V."/>
            <person name="Nash W.E."/>
            <person name="Hallsworth-Pepin K."/>
            <person name="Wilson R.K."/>
            <person name="McClelland M."/>
            <person name="Forsythe S.J."/>
        </authorList>
    </citation>
    <scope>NUCLEOTIDE SEQUENCE [LARGE SCALE GENOMIC DNA]</scope>
    <source>
        <strain>ATCC BAA-894</strain>
    </source>
</reference>
<proteinExistence type="inferred from homology"/>
<gene>
    <name evidence="1" type="primary">argG</name>
    <name type="ordered locus">ESA_03807</name>
</gene>
<comment type="catalytic activity">
    <reaction evidence="1">
        <text>L-citrulline + L-aspartate + ATP = 2-(N(omega)-L-arginino)succinate + AMP + diphosphate + H(+)</text>
        <dbReference type="Rhea" id="RHEA:10932"/>
        <dbReference type="ChEBI" id="CHEBI:15378"/>
        <dbReference type="ChEBI" id="CHEBI:29991"/>
        <dbReference type="ChEBI" id="CHEBI:30616"/>
        <dbReference type="ChEBI" id="CHEBI:33019"/>
        <dbReference type="ChEBI" id="CHEBI:57472"/>
        <dbReference type="ChEBI" id="CHEBI:57743"/>
        <dbReference type="ChEBI" id="CHEBI:456215"/>
        <dbReference type="EC" id="6.3.4.5"/>
    </reaction>
</comment>
<comment type="pathway">
    <text evidence="1">Amino-acid biosynthesis; L-arginine biosynthesis; L-arginine from L-ornithine and carbamoyl phosphate: step 2/3.</text>
</comment>
<comment type="subunit">
    <text evidence="1">Homotetramer.</text>
</comment>
<comment type="subcellular location">
    <subcellularLocation>
        <location evidence="1">Cytoplasm</location>
    </subcellularLocation>
</comment>
<comment type="similarity">
    <text evidence="1">Belongs to the argininosuccinate synthase family. Type 1 subfamily.</text>
</comment>
<feature type="chain" id="PRO_1000000395" description="Argininosuccinate synthase">
    <location>
        <begin position="1"/>
        <end position="405"/>
    </location>
</feature>
<feature type="binding site" evidence="1">
    <location>
        <begin position="12"/>
        <end position="20"/>
    </location>
    <ligand>
        <name>ATP</name>
        <dbReference type="ChEBI" id="CHEBI:30616"/>
    </ligand>
</feature>
<feature type="binding site" evidence="1">
    <location>
        <position position="92"/>
    </location>
    <ligand>
        <name>L-citrulline</name>
        <dbReference type="ChEBI" id="CHEBI:57743"/>
    </ligand>
</feature>
<feature type="binding site" evidence="1">
    <location>
        <position position="97"/>
    </location>
    <ligand>
        <name>L-citrulline</name>
        <dbReference type="ChEBI" id="CHEBI:57743"/>
    </ligand>
</feature>
<feature type="binding site" evidence="1">
    <location>
        <position position="122"/>
    </location>
    <ligand>
        <name>ATP</name>
        <dbReference type="ChEBI" id="CHEBI:30616"/>
    </ligand>
</feature>
<feature type="binding site" evidence="1">
    <location>
        <position position="124"/>
    </location>
    <ligand>
        <name>L-aspartate</name>
        <dbReference type="ChEBI" id="CHEBI:29991"/>
    </ligand>
</feature>
<feature type="binding site" evidence="1">
    <location>
        <position position="128"/>
    </location>
    <ligand>
        <name>L-aspartate</name>
        <dbReference type="ChEBI" id="CHEBI:29991"/>
    </ligand>
</feature>
<feature type="binding site" evidence="1">
    <location>
        <position position="128"/>
    </location>
    <ligand>
        <name>L-citrulline</name>
        <dbReference type="ChEBI" id="CHEBI:57743"/>
    </ligand>
</feature>
<feature type="binding site" evidence="1">
    <location>
        <position position="129"/>
    </location>
    <ligand>
        <name>L-aspartate</name>
        <dbReference type="ChEBI" id="CHEBI:29991"/>
    </ligand>
</feature>
<feature type="binding site" evidence="1">
    <location>
        <position position="132"/>
    </location>
    <ligand>
        <name>L-citrulline</name>
        <dbReference type="ChEBI" id="CHEBI:57743"/>
    </ligand>
</feature>
<feature type="binding site" evidence="1">
    <location>
        <position position="181"/>
    </location>
    <ligand>
        <name>L-citrulline</name>
        <dbReference type="ChEBI" id="CHEBI:57743"/>
    </ligand>
</feature>
<feature type="binding site" evidence="1">
    <location>
        <position position="190"/>
    </location>
    <ligand>
        <name>L-citrulline</name>
        <dbReference type="ChEBI" id="CHEBI:57743"/>
    </ligand>
</feature>
<feature type="binding site" evidence="1">
    <location>
        <position position="266"/>
    </location>
    <ligand>
        <name>L-citrulline</name>
        <dbReference type="ChEBI" id="CHEBI:57743"/>
    </ligand>
</feature>
<feature type="binding site" evidence="1">
    <location>
        <position position="278"/>
    </location>
    <ligand>
        <name>L-citrulline</name>
        <dbReference type="ChEBI" id="CHEBI:57743"/>
    </ligand>
</feature>